<sequence length="403" mass="42184">MKTIDELLAEGVDGKRVFVRADLNVPLADGLITDDGRIRAVLPTVKALAEAGAKVVVASHLGRPKGAPDPAFSLLPAAERLGELLGAPVAFAQDTVGPAAHDAVNGLQPGQVAVIENLRFNAGETSKDDAERGAFADRLAALADIYVGDGFGAVHRKHASVYDLPARLPHYAGYLIATEVNVLKKLTEDVKRPYVVALGGAKVSDKLAVIDQLLGKADRLLIGGGMAYTFLKAKGYEVGISLLQEDQIPTVKEYMERAEKNGVELVLPVDVLVSTEFPDLKTKAPANPTTVAADAIPADQEGLDIGPETRKLYASKLADAATVFWNGPMGVFEHPDYAEGTKAVAQALVDSQAFTVVGGGDSAAAVRILGFDETAFGHISTGGGASLEYLEGKTLPGLAALED</sequence>
<proteinExistence type="inferred from homology"/>
<protein>
    <recommendedName>
        <fullName evidence="1">Phosphoglycerate kinase</fullName>
        <ecNumber evidence="1">2.7.2.3</ecNumber>
    </recommendedName>
</protein>
<gene>
    <name evidence="1" type="primary">pgk</name>
    <name type="ordered locus">SAV_6297</name>
</gene>
<organism>
    <name type="scientific">Streptomyces avermitilis (strain ATCC 31267 / DSM 46492 / JCM 5070 / NBRC 14893 / NCIMB 12804 / NRRL 8165 / MA-4680)</name>
    <dbReference type="NCBI Taxonomy" id="227882"/>
    <lineage>
        <taxon>Bacteria</taxon>
        <taxon>Bacillati</taxon>
        <taxon>Actinomycetota</taxon>
        <taxon>Actinomycetes</taxon>
        <taxon>Kitasatosporales</taxon>
        <taxon>Streptomycetaceae</taxon>
        <taxon>Streptomyces</taxon>
    </lineage>
</organism>
<feature type="chain" id="PRO_0000146012" description="Phosphoglycerate kinase">
    <location>
        <begin position="1"/>
        <end position="403"/>
    </location>
</feature>
<feature type="binding site" evidence="1">
    <location>
        <begin position="22"/>
        <end position="24"/>
    </location>
    <ligand>
        <name>substrate</name>
    </ligand>
</feature>
<feature type="binding site" evidence="1">
    <location>
        <position position="37"/>
    </location>
    <ligand>
        <name>substrate</name>
    </ligand>
</feature>
<feature type="binding site" evidence="1">
    <location>
        <begin position="60"/>
        <end position="63"/>
    </location>
    <ligand>
        <name>substrate</name>
    </ligand>
</feature>
<feature type="binding site" evidence="1">
    <location>
        <position position="119"/>
    </location>
    <ligand>
        <name>substrate</name>
    </ligand>
</feature>
<feature type="binding site" evidence="1">
    <location>
        <position position="156"/>
    </location>
    <ligand>
        <name>substrate</name>
    </ligand>
</feature>
<feature type="binding site" evidence="1">
    <location>
        <position position="206"/>
    </location>
    <ligand>
        <name>ATP</name>
        <dbReference type="ChEBI" id="CHEBI:30616"/>
    </ligand>
</feature>
<feature type="binding site" evidence="1">
    <location>
        <position position="302"/>
    </location>
    <ligand>
        <name>ATP</name>
        <dbReference type="ChEBI" id="CHEBI:30616"/>
    </ligand>
</feature>
<feature type="binding site" evidence="1">
    <location>
        <position position="333"/>
    </location>
    <ligand>
        <name>ATP</name>
        <dbReference type="ChEBI" id="CHEBI:30616"/>
    </ligand>
</feature>
<feature type="binding site" evidence="1">
    <location>
        <begin position="359"/>
        <end position="362"/>
    </location>
    <ligand>
        <name>ATP</name>
        <dbReference type="ChEBI" id="CHEBI:30616"/>
    </ligand>
</feature>
<reference key="1">
    <citation type="journal article" date="2001" name="Proc. Natl. Acad. Sci. U.S.A.">
        <title>Genome sequence of an industrial microorganism Streptomyces avermitilis: deducing the ability of producing secondary metabolites.</title>
        <authorList>
            <person name="Omura S."/>
            <person name="Ikeda H."/>
            <person name="Ishikawa J."/>
            <person name="Hanamoto A."/>
            <person name="Takahashi C."/>
            <person name="Shinose M."/>
            <person name="Takahashi Y."/>
            <person name="Horikawa H."/>
            <person name="Nakazawa H."/>
            <person name="Osonoe T."/>
            <person name="Kikuchi H."/>
            <person name="Shiba T."/>
            <person name="Sakaki Y."/>
            <person name="Hattori M."/>
        </authorList>
    </citation>
    <scope>NUCLEOTIDE SEQUENCE [LARGE SCALE GENOMIC DNA]</scope>
    <source>
        <strain>ATCC 31267 / DSM 46492 / JCM 5070 / NBRC 14893 / NCIMB 12804 / NRRL 8165 / MA-4680</strain>
    </source>
</reference>
<reference key="2">
    <citation type="journal article" date="2003" name="Nat. Biotechnol.">
        <title>Complete genome sequence and comparative analysis of the industrial microorganism Streptomyces avermitilis.</title>
        <authorList>
            <person name="Ikeda H."/>
            <person name="Ishikawa J."/>
            <person name="Hanamoto A."/>
            <person name="Shinose M."/>
            <person name="Kikuchi H."/>
            <person name="Shiba T."/>
            <person name="Sakaki Y."/>
            <person name="Hattori M."/>
            <person name="Omura S."/>
        </authorList>
    </citation>
    <scope>NUCLEOTIDE SEQUENCE [LARGE SCALE GENOMIC DNA]</scope>
    <source>
        <strain>ATCC 31267 / DSM 46492 / JCM 5070 / NBRC 14893 / NCIMB 12804 / NRRL 8165 / MA-4680</strain>
    </source>
</reference>
<evidence type="ECO:0000255" key="1">
    <source>
        <dbReference type="HAMAP-Rule" id="MF_00145"/>
    </source>
</evidence>
<accession>Q829W2</accession>
<keyword id="KW-0067">ATP-binding</keyword>
<keyword id="KW-0963">Cytoplasm</keyword>
<keyword id="KW-0324">Glycolysis</keyword>
<keyword id="KW-0418">Kinase</keyword>
<keyword id="KW-0547">Nucleotide-binding</keyword>
<keyword id="KW-1185">Reference proteome</keyword>
<keyword id="KW-0808">Transferase</keyword>
<comment type="catalytic activity">
    <reaction evidence="1">
        <text>(2R)-3-phosphoglycerate + ATP = (2R)-3-phospho-glyceroyl phosphate + ADP</text>
        <dbReference type="Rhea" id="RHEA:14801"/>
        <dbReference type="ChEBI" id="CHEBI:30616"/>
        <dbReference type="ChEBI" id="CHEBI:57604"/>
        <dbReference type="ChEBI" id="CHEBI:58272"/>
        <dbReference type="ChEBI" id="CHEBI:456216"/>
        <dbReference type="EC" id="2.7.2.3"/>
    </reaction>
</comment>
<comment type="pathway">
    <text evidence="1">Carbohydrate degradation; glycolysis; pyruvate from D-glyceraldehyde 3-phosphate: step 2/5.</text>
</comment>
<comment type="subunit">
    <text evidence="1">Monomer.</text>
</comment>
<comment type="subcellular location">
    <subcellularLocation>
        <location evidence="1">Cytoplasm</location>
    </subcellularLocation>
</comment>
<comment type="similarity">
    <text evidence="1">Belongs to the phosphoglycerate kinase family.</text>
</comment>
<name>PGK_STRAW</name>
<dbReference type="EC" id="2.7.2.3" evidence="1"/>
<dbReference type="EMBL" id="BA000030">
    <property type="protein sequence ID" value="BAC74008.1"/>
    <property type="molecule type" value="Genomic_DNA"/>
</dbReference>
<dbReference type="RefSeq" id="WP_010987698.1">
    <property type="nucleotide sequence ID" value="NZ_JZJK01000089.1"/>
</dbReference>
<dbReference type="SMR" id="Q829W2"/>
<dbReference type="GeneID" id="41543372"/>
<dbReference type="KEGG" id="sma:SAVERM_6297"/>
<dbReference type="eggNOG" id="COG0126">
    <property type="taxonomic scope" value="Bacteria"/>
</dbReference>
<dbReference type="HOGENOM" id="CLU_025427_0_2_11"/>
<dbReference type="OrthoDB" id="9808460at2"/>
<dbReference type="UniPathway" id="UPA00109">
    <property type="reaction ID" value="UER00185"/>
</dbReference>
<dbReference type="Proteomes" id="UP000000428">
    <property type="component" value="Chromosome"/>
</dbReference>
<dbReference type="GO" id="GO:0005829">
    <property type="term" value="C:cytosol"/>
    <property type="evidence" value="ECO:0007669"/>
    <property type="project" value="TreeGrafter"/>
</dbReference>
<dbReference type="GO" id="GO:0043531">
    <property type="term" value="F:ADP binding"/>
    <property type="evidence" value="ECO:0007669"/>
    <property type="project" value="TreeGrafter"/>
</dbReference>
<dbReference type="GO" id="GO:0005524">
    <property type="term" value="F:ATP binding"/>
    <property type="evidence" value="ECO:0007669"/>
    <property type="project" value="UniProtKB-KW"/>
</dbReference>
<dbReference type="GO" id="GO:0004618">
    <property type="term" value="F:phosphoglycerate kinase activity"/>
    <property type="evidence" value="ECO:0007669"/>
    <property type="project" value="UniProtKB-UniRule"/>
</dbReference>
<dbReference type="GO" id="GO:0006094">
    <property type="term" value="P:gluconeogenesis"/>
    <property type="evidence" value="ECO:0007669"/>
    <property type="project" value="TreeGrafter"/>
</dbReference>
<dbReference type="GO" id="GO:0006096">
    <property type="term" value="P:glycolytic process"/>
    <property type="evidence" value="ECO:0007669"/>
    <property type="project" value="UniProtKB-UniRule"/>
</dbReference>
<dbReference type="CDD" id="cd00318">
    <property type="entry name" value="Phosphoglycerate_kinase"/>
    <property type="match status" value="1"/>
</dbReference>
<dbReference type="FunFam" id="3.40.50.1260:FF:000006">
    <property type="entry name" value="Phosphoglycerate kinase"/>
    <property type="match status" value="1"/>
</dbReference>
<dbReference type="FunFam" id="3.40.50.1260:FF:000031">
    <property type="entry name" value="Phosphoglycerate kinase 1"/>
    <property type="match status" value="1"/>
</dbReference>
<dbReference type="Gene3D" id="3.40.50.1260">
    <property type="entry name" value="Phosphoglycerate kinase, N-terminal domain"/>
    <property type="match status" value="2"/>
</dbReference>
<dbReference type="HAMAP" id="MF_00145">
    <property type="entry name" value="Phosphoglyc_kinase"/>
    <property type="match status" value="1"/>
</dbReference>
<dbReference type="InterPro" id="IPR001576">
    <property type="entry name" value="Phosphoglycerate_kinase"/>
</dbReference>
<dbReference type="InterPro" id="IPR015911">
    <property type="entry name" value="Phosphoglycerate_kinase_CS"/>
</dbReference>
<dbReference type="InterPro" id="IPR015824">
    <property type="entry name" value="Phosphoglycerate_kinase_N"/>
</dbReference>
<dbReference type="InterPro" id="IPR036043">
    <property type="entry name" value="Phosphoglycerate_kinase_sf"/>
</dbReference>
<dbReference type="PANTHER" id="PTHR11406">
    <property type="entry name" value="PHOSPHOGLYCERATE KINASE"/>
    <property type="match status" value="1"/>
</dbReference>
<dbReference type="PANTHER" id="PTHR11406:SF23">
    <property type="entry name" value="PHOSPHOGLYCERATE KINASE 1, CHLOROPLASTIC-RELATED"/>
    <property type="match status" value="1"/>
</dbReference>
<dbReference type="Pfam" id="PF00162">
    <property type="entry name" value="PGK"/>
    <property type="match status" value="1"/>
</dbReference>
<dbReference type="PIRSF" id="PIRSF000724">
    <property type="entry name" value="Pgk"/>
    <property type="match status" value="1"/>
</dbReference>
<dbReference type="PRINTS" id="PR00477">
    <property type="entry name" value="PHGLYCKINASE"/>
</dbReference>
<dbReference type="SUPFAM" id="SSF53748">
    <property type="entry name" value="Phosphoglycerate kinase"/>
    <property type="match status" value="1"/>
</dbReference>
<dbReference type="PROSITE" id="PS00111">
    <property type="entry name" value="PGLYCERATE_KINASE"/>
    <property type="match status" value="1"/>
</dbReference>